<keyword id="KW-0131">Cell cycle</keyword>
<keyword id="KW-0132">Cell division</keyword>
<keyword id="KW-0175">Coiled coil</keyword>
<keyword id="KW-0493">Microtubule</keyword>
<keyword id="KW-0498">Mitosis</keyword>
<keyword id="KW-1185">Reference proteome</keyword>
<organism evidence="8">
    <name type="scientific">Arabidopsis thaliana</name>
    <name type="common">Mouse-ear cress</name>
    <dbReference type="NCBI Taxonomy" id="3702"/>
    <lineage>
        <taxon>Eukaryota</taxon>
        <taxon>Viridiplantae</taxon>
        <taxon>Streptophyta</taxon>
        <taxon>Embryophyta</taxon>
        <taxon>Tracheophyta</taxon>
        <taxon>Spermatophyta</taxon>
        <taxon>Magnoliopsida</taxon>
        <taxon>eudicotyledons</taxon>
        <taxon>Gunneridae</taxon>
        <taxon>Pentapetalae</taxon>
        <taxon>rosids</taxon>
        <taxon>malvids</taxon>
        <taxon>Brassicales</taxon>
        <taxon>Brassicaceae</taxon>
        <taxon>Camelineae</taxon>
        <taxon>Arabidopsis</taxon>
    </lineage>
</organism>
<protein>
    <recommendedName>
        <fullName evidence="4">AUGMIN subunit 2</fullName>
    </recommendedName>
</protein>
<gene>
    <name evidence="4" type="primary">AUG2</name>
    <name evidence="6" type="ordered locus">At2g32980</name>
    <name evidence="7" type="ORF">T21L14.8</name>
</gene>
<accession>O48767</accession>
<accession>Q8LAL1</accession>
<accession>Q943Z8</accession>
<proteinExistence type="evidence at protein level"/>
<reference key="1">
    <citation type="journal article" date="1999" name="Nature">
        <title>Sequence and analysis of chromosome 2 of the plant Arabidopsis thaliana.</title>
        <authorList>
            <person name="Lin X."/>
            <person name="Kaul S."/>
            <person name="Rounsley S.D."/>
            <person name="Shea T.P."/>
            <person name="Benito M.-I."/>
            <person name="Town C.D."/>
            <person name="Fujii C.Y."/>
            <person name="Mason T.M."/>
            <person name="Bowman C.L."/>
            <person name="Barnstead M.E."/>
            <person name="Feldblyum T.V."/>
            <person name="Buell C.R."/>
            <person name="Ketchum K.A."/>
            <person name="Lee J.J."/>
            <person name="Ronning C.M."/>
            <person name="Koo H.L."/>
            <person name="Moffat K.S."/>
            <person name="Cronin L.A."/>
            <person name="Shen M."/>
            <person name="Pai G."/>
            <person name="Van Aken S."/>
            <person name="Umayam L."/>
            <person name="Tallon L.J."/>
            <person name="Gill J.E."/>
            <person name="Adams M.D."/>
            <person name="Carrera A.J."/>
            <person name="Creasy T.H."/>
            <person name="Goodman H.M."/>
            <person name="Somerville C.R."/>
            <person name="Copenhaver G.P."/>
            <person name="Preuss D."/>
            <person name="Nierman W.C."/>
            <person name="White O."/>
            <person name="Eisen J.A."/>
            <person name="Salzberg S.L."/>
            <person name="Fraser C.M."/>
            <person name="Venter J.C."/>
        </authorList>
    </citation>
    <scope>NUCLEOTIDE SEQUENCE [LARGE SCALE GENOMIC DNA]</scope>
    <source>
        <strain>cv. Columbia</strain>
    </source>
</reference>
<reference key="2">
    <citation type="journal article" date="2017" name="Plant J.">
        <title>Araport11: a complete reannotation of the Arabidopsis thaliana reference genome.</title>
        <authorList>
            <person name="Cheng C.Y."/>
            <person name="Krishnakumar V."/>
            <person name="Chan A.P."/>
            <person name="Thibaud-Nissen F."/>
            <person name="Schobel S."/>
            <person name="Town C.D."/>
        </authorList>
    </citation>
    <scope>GENOME REANNOTATION</scope>
    <source>
        <strain>cv. Columbia</strain>
    </source>
</reference>
<reference key="3">
    <citation type="journal article" date="2003" name="Science">
        <title>Empirical analysis of transcriptional activity in the Arabidopsis genome.</title>
        <authorList>
            <person name="Yamada K."/>
            <person name="Lim J."/>
            <person name="Dale J.M."/>
            <person name="Chen H."/>
            <person name="Shinn P."/>
            <person name="Palm C.J."/>
            <person name="Southwick A.M."/>
            <person name="Wu H.C."/>
            <person name="Kim C.J."/>
            <person name="Nguyen M."/>
            <person name="Pham P.K."/>
            <person name="Cheuk R.F."/>
            <person name="Karlin-Newmann G."/>
            <person name="Liu S.X."/>
            <person name="Lam B."/>
            <person name="Sakano H."/>
            <person name="Wu T."/>
            <person name="Yu G."/>
            <person name="Miranda M."/>
            <person name="Quach H.L."/>
            <person name="Tripp M."/>
            <person name="Chang C.H."/>
            <person name="Lee J.M."/>
            <person name="Toriumi M.J."/>
            <person name="Chan M.M."/>
            <person name="Tang C.C."/>
            <person name="Onodera C.S."/>
            <person name="Deng J.M."/>
            <person name="Akiyama K."/>
            <person name="Ansari Y."/>
            <person name="Arakawa T."/>
            <person name="Banh J."/>
            <person name="Banno F."/>
            <person name="Bowser L."/>
            <person name="Brooks S.Y."/>
            <person name="Carninci P."/>
            <person name="Chao Q."/>
            <person name="Choy N."/>
            <person name="Enju A."/>
            <person name="Goldsmith A.D."/>
            <person name="Gurjal M."/>
            <person name="Hansen N.F."/>
            <person name="Hayashizaki Y."/>
            <person name="Johnson-Hopson C."/>
            <person name="Hsuan V.W."/>
            <person name="Iida K."/>
            <person name="Karnes M."/>
            <person name="Khan S."/>
            <person name="Koesema E."/>
            <person name="Ishida J."/>
            <person name="Jiang P.X."/>
            <person name="Jones T."/>
            <person name="Kawai J."/>
            <person name="Kamiya A."/>
            <person name="Meyers C."/>
            <person name="Nakajima M."/>
            <person name="Narusaka M."/>
            <person name="Seki M."/>
            <person name="Sakurai T."/>
            <person name="Satou M."/>
            <person name="Tamse R."/>
            <person name="Vaysberg M."/>
            <person name="Wallender E.K."/>
            <person name="Wong C."/>
            <person name="Yamamura Y."/>
            <person name="Yuan S."/>
            <person name="Shinozaki K."/>
            <person name="Davis R.W."/>
            <person name="Theologis A."/>
            <person name="Ecker J.R."/>
        </authorList>
    </citation>
    <scope>NUCLEOTIDE SEQUENCE [LARGE SCALE MRNA]</scope>
    <source>
        <strain>cv. Columbia</strain>
    </source>
</reference>
<reference key="4">
    <citation type="submission" date="2002-03" db="EMBL/GenBank/DDBJ databases">
        <title>Full-length cDNA from Arabidopsis thaliana.</title>
        <authorList>
            <person name="Brover V.V."/>
            <person name="Troukhan M.E."/>
            <person name="Alexandrov N.A."/>
            <person name="Lu Y.-P."/>
            <person name="Flavell R.B."/>
            <person name="Feldmann K.A."/>
        </authorList>
    </citation>
    <scope>NUCLEOTIDE SEQUENCE [LARGE SCALE MRNA]</scope>
</reference>
<reference key="5">
    <citation type="journal article" date="2012" name="Plant Cell">
        <title>Characterization of the Arabidopsis augmin complex uncovers its critical function in the assembly of the acentrosomal spindle and phragmoplast microtubule arrays.</title>
        <authorList>
            <person name="Hotta T."/>
            <person name="Kong Z."/>
            <person name="Ho C.M."/>
            <person name="Zeng C.J."/>
            <person name="Horio T."/>
            <person name="Fong S."/>
            <person name="Vuong T."/>
            <person name="Lee Y.R."/>
            <person name="Liu B."/>
        </authorList>
    </citation>
    <scope>FUNCTION</scope>
    <scope>IDENTIFICATION IN THE AUGMIN COMPLEX BY MASS SPECTROMETRY</scope>
    <scope>DISRUPTION PHENOTYPE</scope>
</reference>
<feature type="chain" id="PRO_0000434092" description="AUGMIN subunit 2">
    <location>
        <begin position="1"/>
        <end position="296"/>
    </location>
</feature>
<feature type="region of interest" description="Disordered" evidence="2">
    <location>
        <begin position="218"/>
        <end position="296"/>
    </location>
</feature>
<feature type="coiled-coil region" evidence="1">
    <location>
        <begin position="56"/>
        <end position="83"/>
    </location>
</feature>
<feature type="coiled-coil region" evidence="1">
    <location>
        <begin position="253"/>
        <end position="285"/>
    </location>
</feature>
<feature type="compositionally biased region" description="Acidic residues" evidence="2">
    <location>
        <begin position="264"/>
        <end position="277"/>
    </location>
</feature>
<feature type="sequence conflict" description="In Ref. 4; AAM65283." evidence="5" ref="4">
    <original>N</original>
    <variation>NE</variation>
    <location>
        <position position="265"/>
    </location>
</feature>
<sequence length="296" mass="33019">MSMGGDTTWVGKKPIRRIGGLSDALSIASDLGFAVAPPPSQEELQSFASSNGERGDDLIRVLRELSVVQRKIADLQVELQGRKDDKNVAHLTHVGEMQKKIETLSRITQILKDVIQNKDRIIARLQQPYSLDCIPVEAEYQKQFSELLMKAASDYGALTASVSDFQWSQNFKEPPSVWGEMLRPIPVALASCTRFFEAMSAMRESFATLQELRVGNSAVSLPTTPGGNEMTHRDSDCVTPPQGRIESSFDDLAVHKTRRQNNDQNEEEEEEEEEEDGNNNGNRRLSWPPSVKKSSV</sequence>
<dbReference type="EMBL" id="AC003033">
    <property type="protein sequence ID" value="AAB91972.2"/>
    <property type="molecule type" value="Genomic_DNA"/>
</dbReference>
<dbReference type="EMBL" id="CP002685">
    <property type="protein sequence ID" value="AEC08770.1"/>
    <property type="molecule type" value="Genomic_DNA"/>
</dbReference>
<dbReference type="EMBL" id="AF439838">
    <property type="protein sequence ID" value="AAL27508.1"/>
    <property type="molecule type" value="mRNA"/>
</dbReference>
<dbReference type="EMBL" id="AY125566">
    <property type="protein sequence ID" value="AAM78076.1"/>
    <property type="molecule type" value="mRNA"/>
</dbReference>
<dbReference type="EMBL" id="AY087746">
    <property type="protein sequence ID" value="AAM65283.1"/>
    <property type="molecule type" value="mRNA"/>
</dbReference>
<dbReference type="PIR" id="T01109">
    <property type="entry name" value="T01109"/>
</dbReference>
<dbReference type="RefSeq" id="NP_565760.1">
    <property type="nucleotide sequence ID" value="NM_128858.4"/>
</dbReference>
<dbReference type="SMR" id="O48767"/>
<dbReference type="FunCoup" id="O48767">
    <property type="interactions" value="1051"/>
</dbReference>
<dbReference type="IntAct" id="O48767">
    <property type="interactions" value="4"/>
</dbReference>
<dbReference type="STRING" id="3702.O48767"/>
<dbReference type="iPTMnet" id="O48767"/>
<dbReference type="PaxDb" id="3702-AT2G32980.1"/>
<dbReference type="ProteomicsDB" id="240927"/>
<dbReference type="EnsemblPlants" id="AT2G32980.1">
    <property type="protein sequence ID" value="AT2G32980.1"/>
    <property type="gene ID" value="AT2G32980"/>
</dbReference>
<dbReference type="GeneID" id="817860"/>
<dbReference type="Gramene" id="AT2G32980.1">
    <property type="protein sequence ID" value="AT2G32980.1"/>
    <property type="gene ID" value="AT2G32980"/>
</dbReference>
<dbReference type="KEGG" id="ath:AT2G32980"/>
<dbReference type="Araport" id="AT2G32980"/>
<dbReference type="TAIR" id="AT2G32980">
    <property type="gene designation" value="AUG2"/>
</dbReference>
<dbReference type="eggNOG" id="ENOG502QRF0">
    <property type="taxonomic scope" value="Eukaryota"/>
</dbReference>
<dbReference type="HOGENOM" id="CLU_063148_0_0_1"/>
<dbReference type="InParanoid" id="O48767"/>
<dbReference type="OMA" id="PWKNESS"/>
<dbReference type="PhylomeDB" id="O48767"/>
<dbReference type="PRO" id="PR:O48767"/>
<dbReference type="Proteomes" id="UP000006548">
    <property type="component" value="Chromosome 2"/>
</dbReference>
<dbReference type="ExpressionAtlas" id="O48767">
    <property type="expression patterns" value="baseline and differential"/>
</dbReference>
<dbReference type="GO" id="GO:0005874">
    <property type="term" value="C:microtubule"/>
    <property type="evidence" value="ECO:0007669"/>
    <property type="project" value="UniProtKB-KW"/>
</dbReference>
<dbReference type="GO" id="GO:0000911">
    <property type="term" value="P:cytokinesis by cell plate formation"/>
    <property type="evidence" value="ECO:0000315"/>
    <property type="project" value="TAIR"/>
</dbReference>
<dbReference type="GO" id="GO:0007020">
    <property type="term" value="P:microtubule nucleation"/>
    <property type="evidence" value="ECO:0000315"/>
    <property type="project" value="TAIR"/>
</dbReference>
<dbReference type="GO" id="GO:0031023">
    <property type="term" value="P:microtubule organizing center organization"/>
    <property type="evidence" value="ECO:0007669"/>
    <property type="project" value="InterPro"/>
</dbReference>
<dbReference type="GO" id="GO:0000278">
    <property type="term" value="P:mitotic cell cycle"/>
    <property type="evidence" value="ECO:0000315"/>
    <property type="project" value="TAIR"/>
</dbReference>
<dbReference type="GO" id="GO:0051225">
    <property type="term" value="P:spindle assembly"/>
    <property type="evidence" value="ECO:0007669"/>
    <property type="project" value="InterPro"/>
</dbReference>
<dbReference type="InterPro" id="IPR028346">
    <property type="entry name" value="HAUS2"/>
</dbReference>
<dbReference type="PANTHER" id="PTHR16039">
    <property type="entry name" value="HAUS AUGMIN-LIKE COMPLEX SUBUNIT 2"/>
    <property type="match status" value="1"/>
</dbReference>
<dbReference type="PANTHER" id="PTHR16039:SF1">
    <property type="entry name" value="HAUS AUGMIN-LIKE COMPLEX SUBUNIT 2"/>
    <property type="match status" value="1"/>
</dbReference>
<dbReference type="Pfam" id="PF15003">
    <property type="entry name" value="HAUS2"/>
    <property type="match status" value="1"/>
</dbReference>
<comment type="function">
    <text evidence="3">Contributes to the assembly of the acentrosomal spindle and phragmoplast microtubule arrays as part of the augmin complex.</text>
</comment>
<comment type="subunit">
    <text evidence="3">Part of the augmin complex composed of 8 subunits. The complex acts on microtubules and interacts with gamma-tubulin in spindles and the phragmoplast.</text>
</comment>
<comment type="disruption phenotype">
    <text evidence="3">Lethal when homozygous.</text>
</comment>
<comment type="similarity">
    <text evidence="5">Belongs to the HAUS2 family.</text>
</comment>
<name>AUG2_ARATH</name>
<evidence type="ECO:0000255" key="1"/>
<evidence type="ECO:0000256" key="2">
    <source>
        <dbReference type="SAM" id="MobiDB-lite"/>
    </source>
</evidence>
<evidence type="ECO:0000269" key="3">
    <source>
    </source>
</evidence>
<evidence type="ECO:0000303" key="4">
    <source>
    </source>
</evidence>
<evidence type="ECO:0000305" key="5"/>
<evidence type="ECO:0000312" key="6">
    <source>
        <dbReference type="Araport" id="AT2G32980"/>
    </source>
</evidence>
<evidence type="ECO:0000312" key="7">
    <source>
        <dbReference type="EMBL" id="AAL27508.1"/>
    </source>
</evidence>
<evidence type="ECO:0000312" key="8">
    <source>
        <dbReference type="Proteomes" id="UP000006548"/>
    </source>
</evidence>